<reference key="1">
    <citation type="journal article" date="2010" name="Genome Biol.">
        <title>Structure and dynamics of the pan-genome of Streptococcus pneumoniae and closely related species.</title>
        <authorList>
            <person name="Donati C."/>
            <person name="Hiller N.L."/>
            <person name="Tettelin H."/>
            <person name="Muzzi A."/>
            <person name="Croucher N.J."/>
            <person name="Angiuoli S.V."/>
            <person name="Oggioni M."/>
            <person name="Dunning Hotopp J.C."/>
            <person name="Hu F.Z."/>
            <person name="Riley D.R."/>
            <person name="Covacci A."/>
            <person name="Mitchell T.J."/>
            <person name="Bentley S.D."/>
            <person name="Kilian M."/>
            <person name="Ehrlich G.D."/>
            <person name="Rappuoli R."/>
            <person name="Moxon E.R."/>
            <person name="Masignani V."/>
        </authorList>
    </citation>
    <scope>NUCLEOTIDE SEQUENCE [LARGE SCALE GENOMIC DNA]</scope>
    <source>
        <strain>JJA</strain>
    </source>
</reference>
<dbReference type="EMBL" id="CP000919">
    <property type="protein sequence ID" value="ACO19837.1"/>
    <property type="molecule type" value="Genomic_DNA"/>
</dbReference>
<dbReference type="RefSeq" id="WP_001068669.1">
    <property type="nucleotide sequence ID" value="NC_012466.1"/>
</dbReference>
<dbReference type="SMR" id="C1CEP8"/>
<dbReference type="GeneID" id="93739485"/>
<dbReference type="KEGG" id="sjj:SPJ_1209"/>
<dbReference type="HOGENOM" id="CLU_103507_2_1_9"/>
<dbReference type="Proteomes" id="UP000002206">
    <property type="component" value="Chromosome"/>
</dbReference>
<dbReference type="GO" id="GO:0022625">
    <property type="term" value="C:cytosolic large ribosomal subunit"/>
    <property type="evidence" value="ECO:0007669"/>
    <property type="project" value="TreeGrafter"/>
</dbReference>
<dbReference type="GO" id="GO:0003735">
    <property type="term" value="F:structural constituent of ribosome"/>
    <property type="evidence" value="ECO:0007669"/>
    <property type="project" value="InterPro"/>
</dbReference>
<dbReference type="GO" id="GO:0006412">
    <property type="term" value="P:translation"/>
    <property type="evidence" value="ECO:0007669"/>
    <property type="project" value="UniProtKB-UniRule"/>
</dbReference>
<dbReference type="FunFam" id="2.30.30.790:FF:000001">
    <property type="entry name" value="50S ribosomal protein L19"/>
    <property type="match status" value="1"/>
</dbReference>
<dbReference type="Gene3D" id="2.30.30.790">
    <property type="match status" value="1"/>
</dbReference>
<dbReference type="HAMAP" id="MF_00402">
    <property type="entry name" value="Ribosomal_bL19"/>
    <property type="match status" value="1"/>
</dbReference>
<dbReference type="InterPro" id="IPR001857">
    <property type="entry name" value="Ribosomal_bL19"/>
</dbReference>
<dbReference type="InterPro" id="IPR018257">
    <property type="entry name" value="Ribosomal_bL19_CS"/>
</dbReference>
<dbReference type="InterPro" id="IPR038657">
    <property type="entry name" value="Ribosomal_bL19_sf"/>
</dbReference>
<dbReference type="InterPro" id="IPR008991">
    <property type="entry name" value="Translation_prot_SH3-like_sf"/>
</dbReference>
<dbReference type="NCBIfam" id="TIGR01024">
    <property type="entry name" value="rplS_bact"/>
    <property type="match status" value="1"/>
</dbReference>
<dbReference type="PANTHER" id="PTHR15680:SF9">
    <property type="entry name" value="LARGE RIBOSOMAL SUBUNIT PROTEIN BL19M"/>
    <property type="match status" value="1"/>
</dbReference>
<dbReference type="PANTHER" id="PTHR15680">
    <property type="entry name" value="RIBOSOMAL PROTEIN L19"/>
    <property type="match status" value="1"/>
</dbReference>
<dbReference type="Pfam" id="PF01245">
    <property type="entry name" value="Ribosomal_L19"/>
    <property type="match status" value="1"/>
</dbReference>
<dbReference type="PIRSF" id="PIRSF002191">
    <property type="entry name" value="Ribosomal_L19"/>
    <property type="match status" value="1"/>
</dbReference>
<dbReference type="PRINTS" id="PR00061">
    <property type="entry name" value="RIBOSOMALL19"/>
</dbReference>
<dbReference type="SUPFAM" id="SSF50104">
    <property type="entry name" value="Translation proteins SH3-like domain"/>
    <property type="match status" value="1"/>
</dbReference>
<dbReference type="PROSITE" id="PS01015">
    <property type="entry name" value="RIBOSOMAL_L19"/>
    <property type="match status" value="1"/>
</dbReference>
<comment type="function">
    <text evidence="1">This protein is located at the 30S-50S ribosomal subunit interface and may play a role in the structure and function of the aminoacyl-tRNA binding site.</text>
</comment>
<comment type="similarity">
    <text evidence="1">Belongs to the bacterial ribosomal protein bL19 family.</text>
</comment>
<keyword id="KW-0687">Ribonucleoprotein</keyword>
<keyword id="KW-0689">Ribosomal protein</keyword>
<accession>C1CEP8</accession>
<gene>
    <name evidence="1" type="primary">rplS</name>
    <name type="ordered locus">SPJ_1209</name>
</gene>
<protein>
    <recommendedName>
        <fullName evidence="1">Large ribosomal subunit protein bL19</fullName>
    </recommendedName>
    <alternativeName>
        <fullName evidence="2">50S ribosomal protein L19</fullName>
    </alternativeName>
</protein>
<evidence type="ECO:0000255" key="1">
    <source>
        <dbReference type="HAMAP-Rule" id="MF_00402"/>
    </source>
</evidence>
<evidence type="ECO:0000305" key="2"/>
<organism>
    <name type="scientific">Streptococcus pneumoniae (strain JJA)</name>
    <dbReference type="NCBI Taxonomy" id="488222"/>
    <lineage>
        <taxon>Bacteria</taxon>
        <taxon>Bacillati</taxon>
        <taxon>Bacillota</taxon>
        <taxon>Bacilli</taxon>
        <taxon>Lactobacillales</taxon>
        <taxon>Streptococcaceae</taxon>
        <taxon>Streptococcus</taxon>
    </lineage>
</organism>
<feature type="chain" id="PRO_1000193897" description="Large ribosomal subunit protein bL19">
    <location>
        <begin position="1"/>
        <end position="115"/>
    </location>
</feature>
<name>RL19_STRZJ</name>
<proteinExistence type="inferred from homology"/>
<sequence length="115" mass="13136">MNPLIQSLTEGQLRTDIPSFRPGDTVRVHAKVVEGNRERIQIFEGVVIARKGAGISENYTVRKISNGVGVERIFPIHTPRVEKIEVVRYGKVRRAKLYYLRALQGKAARIKEIRR</sequence>